<sequence>MKSSPAELISEAKSSTQNSKMKRAVSVLDFILRLIAVVATLASAIAMGTTDESLPFFTQFIRFRAEYDDLPTLRLFVVASAFASGYLILSLPLSILHITRSSARRTRVILIILDMVMLTSLTAASSAAAAIVYLAHKGNAKANWFAFCQQYDSFCERISGSLIGSFIAIPLFIMLILFSALVLSKR</sequence>
<protein>
    <recommendedName>
        <fullName>Casparian strip membrane protein 1</fullName>
        <shortName>LjCASP1</shortName>
    </recommendedName>
</protein>
<keyword id="KW-1003">Cell membrane</keyword>
<keyword id="KW-0961">Cell wall biogenesis/degradation</keyword>
<keyword id="KW-0472">Membrane</keyword>
<keyword id="KW-0812">Transmembrane</keyword>
<keyword id="KW-1133">Transmembrane helix</keyword>
<accession>P0DKC2</accession>
<feature type="chain" id="PRO_0000422082" description="Casparian strip membrane protein 1">
    <location>
        <begin position="1"/>
        <end position="186"/>
    </location>
</feature>
<feature type="topological domain" description="Cytoplasmic" evidence="2">
    <location>
        <begin position="1"/>
        <end position="26"/>
    </location>
</feature>
<feature type="transmembrane region" description="Helical" evidence="2">
    <location>
        <begin position="27"/>
        <end position="47"/>
    </location>
</feature>
<feature type="topological domain" description="Extracellular" evidence="2">
    <location>
        <begin position="48"/>
        <end position="74"/>
    </location>
</feature>
<feature type="transmembrane region" description="Helical" evidence="2">
    <location>
        <begin position="75"/>
        <end position="95"/>
    </location>
</feature>
<feature type="topological domain" description="Cytoplasmic" evidence="2">
    <location>
        <begin position="96"/>
        <end position="107"/>
    </location>
</feature>
<feature type="transmembrane region" description="Helical" evidence="2">
    <location>
        <begin position="108"/>
        <end position="128"/>
    </location>
</feature>
<feature type="topological domain" description="Extracellular" evidence="2">
    <location>
        <begin position="129"/>
        <end position="161"/>
    </location>
</feature>
<feature type="transmembrane region" description="Helical" evidence="2">
    <location>
        <begin position="162"/>
        <end position="182"/>
    </location>
</feature>
<feature type="topological domain" description="Cytoplasmic" evidence="2">
    <location>
        <begin position="183"/>
        <end position="186"/>
    </location>
</feature>
<reference key="1">
    <citation type="journal article" date="2008" name="DNA Res.">
        <title>Genome structure of the legume, Lotus japonicus.</title>
        <authorList>
            <person name="Sato S."/>
            <person name="Nakamura Y."/>
            <person name="Kaneko T."/>
            <person name="Asamizu E."/>
            <person name="Kato T."/>
            <person name="Nakao M."/>
            <person name="Sasamoto S."/>
            <person name="Watanabe A."/>
            <person name="Ono A."/>
            <person name="Kawashima K."/>
            <person name="Fujishiro T."/>
            <person name="Katoh M."/>
            <person name="Kohara M."/>
            <person name="Kishida Y."/>
            <person name="Minami C."/>
            <person name="Nakayama S."/>
            <person name="Nakazaki N."/>
            <person name="Shimizu Y."/>
            <person name="Shinpo S."/>
            <person name="Takahashi C."/>
            <person name="Wada T."/>
            <person name="Yamada M."/>
            <person name="Ohmido N."/>
            <person name="Hayashi M."/>
            <person name="Fukui K."/>
            <person name="Baba T."/>
            <person name="Nakamichi T."/>
            <person name="Mori H."/>
            <person name="Tabata S."/>
        </authorList>
    </citation>
    <scope>NUCLEOTIDE SEQUENCE [LARGE SCALE GENOMIC DNA]</scope>
    <source>
        <strain>cv. Miyakojima MG-20</strain>
    </source>
</reference>
<reference key="2">
    <citation type="journal article" date="2014" name="Plant Physiol.">
        <title>Functional and evolutionary analysis of the CASPARIAN STRIP MEMBRANE DOMAIN PROTEIN family.</title>
        <authorList>
            <person name="Roppolo D."/>
            <person name="Boeckmann B."/>
            <person name="Pfister A."/>
            <person name="Boutet E."/>
            <person name="Rubio M.C."/>
            <person name="Denervaud-Tendon V."/>
            <person name="Vermeer J.E."/>
            <person name="Gheyselinck J."/>
            <person name="Xenarios I."/>
            <person name="Geldner N."/>
        </authorList>
    </citation>
    <scope>SUBCELLULAR LOCATION</scope>
    <scope>GENE FAMILY</scope>
    <scope>NOMENCLATURE</scope>
</reference>
<dbReference type="EMBL" id="AP004962">
    <property type="status" value="NOT_ANNOTATED_CDS"/>
    <property type="molecule type" value="Genomic_DNA"/>
</dbReference>
<dbReference type="GO" id="GO:0005886">
    <property type="term" value="C:plasma membrane"/>
    <property type="evidence" value="ECO:0000314"/>
    <property type="project" value="UniProtKB"/>
</dbReference>
<dbReference type="GO" id="GO:0071555">
    <property type="term" value="P:cell wall organization"/>
    <property type="evidence" value="ECO:0007669"/>
    <property type="project" value="UniProtKB-KW"/>
</dbReference>
<dbReference type="InterPro" id="IPR006459">
    <property type="entry name" value="CASP/CASPL"/>
</dbReference>
<dbReference type="InterPro" id="IPR006702">
    <property type="entry name" value="CASP_dom"/>
</dbReference>
<dbReference type="InterPro" id="IPR044173">
    <property type="entry name" value="CASPL"/>
</dbReference>
<dbReference type="NCBIfam" id="TIGR01569">
    <property type="entry name" value="A_tha_TIGR01569"/>
    <property type="match status" value="1"/>
</dbReference>
<dbReference type="PANTHER" id="PTHR36488:SF12">
    <property type="entry name" value="CASP-LIKE PROTEIN"/>
    <property type="match status" value="1"/>
</dbReference>
<dbReference type="PANTHER" id="PTHR36488">
    <property type="entry name" value="CASP-LIKE PROTEIN 1U1"/>
    <property type="match status" value="1"/>
</dbReference>
<dbReference type="Pfam" id="PF04535">
    <property type="entry name" value="CASP_dom"/>
    <property type="match status" value="1"/>
</dbReference>
<name>CASP1_LOTJA</name>
<organism>
    <name type="scientific">Lotus japonicus</name>
    <name type="common">Lotus corniculatus var. japonicus</name>
    <dbReference type="NCBI Taxonomy" id="34305"/>
    <lineage>
        <taxon>Eukaryota</taxon>
        <taxon>Viridiplantae</taxon>
        <taxon>Streptophyta</taxon>
        <taxon>Embryophyta</taxon>
        <taxon>Tracheophyta</taxon>
        <taxon>Spermatophyta</taxon>
        <taxon>Magnoliopsida</taxon>
        <taxon>eudicotyledons</taxon>
        <taxon>Gunneridae</taxon>
        <taxon>Pentapetalae</taxon>
        <taxon>rosids</taxon>
        <taxon>fabids</taxon>
        <taxon>Fabales</taxon>
        <taxon>Fabaceae</taxon>
        <taxon>Papilionoideae</taxon>
        <taxon>50 kb inversion clade</taxon>
        <taxon>NPAAA clade</taxon>
        <taxon>Hologalegina</taxon>
        <taxon>robinioid clade</taxon>
        <taxon>Loteae</taxon>
        <taxon>Lotus</taxon>
    </lineage>
</organism>
<evidence type="ECO:0000250" key="1"/>
<evidence type="ECO:0000255" key="2"/>
<evidence type="ECO:0000269" key="3">
    <source>
    </source>
</evidence>
<evidence type="ECO:0000305" key="4"/>
<proteinExistence type="inferred from homology"/>
<comment type="function">
    <text evidence="1">Regulates membrane-cell wall junctions and localized cell wall deposition. Required for establishment of the Casparian strip membrane domain (CSD) and the subsequent formation of Casparian strips, a cell wall modification of the root endodermis that determines an apoplastic barrier between the intraorganismal apoplasm and the extraorganismal apoplasm and prevents lateral diffusion (By similarity).</text>
</comment>
<comment type="subunit">
    <text evidence="1">Homodimer and heterodimers.</text>
</comment>
<comment type="subcellular location">
    <subcellularLocation>
        <location evidence="3">Cell membrane</location>
        <topology evidence="3">Multi-pass membrane protein</topology>
    </subcellularLocation>
    <text>Very restricted localization following a belt shape within the plasma membrane which coincides with the position of the Casparian strip membrane domain in the root endodermis.</text>
</comment>
<comment type="similarity">
    <text evidence="4">Belongs to the Casparian strip membrane proteins (CASP) family.</text>
</comment>